<comment type="alternative products">
    <event type="alternative splicing"/>
    <isoform>
        <id>E9Q349-1</id>
        <name>1</name>
        <sequence type="displayed"/>
    </isoform>
    <isoform>
        <id>E9Q349-2</id>
        <name>2</name>
        <sequence type="described" ref="VSP_042397 VSP_042398"/>
    </isoform>
</comment>
<name>WDR25_MOUSE</name>
<organism>
    <name type="scientific">Mus musculus</name>
    <name type="common">Mouse</name>
    <dbReference type="NCBI Taxonomy" id="10090"/>
    <lineage>
        <taxon>Eukaryota</taxon>
        <taxon>Metazoa</taxon>
        <taxon>Chordata</taxon>
        <taxon>Craniata</taxon>
        <taxon>Vertebrata</taxon>
        <taxon>Euteleostomi</taxon>
        <taxon>Mammalia</taxon>
        <taxon>Eutheria</taxon>
        <taxon>Euarchontoglires</taxon>
        <taxon>Glires</taxon>
        <taxon>Rodentia</taxon>
        <taxon>Myomorpha</taxon>
        <taxon>Muroidea</taxon>
        <taxon>Muridae</taxon>
        <taxon>Murinae</taxon>
        <taxon>Mus</taxon>
        <taxon>Mus</taxon>
    </lineage>
</organism>
<keyword id="KW-0025">Alternative splicing</keyword>
<keyword id="KW-1185">Reference proteome</keyword>
<keyword id="KW-0677">Repeat</keyword>
<keyword id="KW-0853">WD repeat</keyword>
<dbReference type="EMBL" id="AK081117">
    <property type="protein sequence ID" value="BAC38138.1"/>
    <property type="molecule type" value="mRNA"/>
</dbReference>
<dbReference type="EMBL" id="AC122811">
    <property type="status" value="NOT_ANNOTATED_CDS"/>
    <property type="molecule type" value="Genomic_DNA"/>
</dbReference>
<dbReference type="EMBL" id="AC140111">
    <property type="status" value="NOT_ANNOTATED_CDS"/>
    <property type="molecule type" value="Genomic_DNA"/>
</dbReference>
<dbReference type="CCDS" id="CCDS49172.1">
    <molecule id="E9Q349-1"/>
</dbReference>
<dbReference type="RefSeq" id="NP_808270.2">
    <molecule id="E9Q349-1"/>
    <property type="nucleotide sequence ID" value="NM_177602.3"/>
</dbReference>
<dbReference type="RefSeq" id="XP_006515720.1">
    <molecule id="E9Q349-1"/>
    <property type="nucleotide sequence ID" value="XM_006515657.4"/>
</dbReference>
<dbReference type="RefSeq" id="XP_006515721.1">
    <molecule id="E9Q349-1"/>
    <property type="nucleotide sequence ID" value="XM_006515658.4"/>
</dbReference>
<dbReference type="RefSeq" id="XP_006515723.1">
    <molecule id="E9Q349-1"/>
    <property type="nucleotide sequence ID" value="XM_006515660.5"/>
</dbReference>
<dbReference type="RefSeq" id="XP_011242356.1">
    <molecule id="E9Q349-1"/>
    <property type="nucleotide sequence ID" value="XM_011244054.4"/>
</dbReference>
<dbReference type="RefSeq" id="XP_011242357.1">
    <molecule id="E9Q349-1"/>
    <property type="nucleotide sequence ID" value="XM_011244055.3"/>
</dbReference>
<dbReference type="SMR" id="E9Q349"/>
<dbReference type="FunCoup" id="E9Q349">
    <property type="interactions" value="60"/>
</dbReference>
<dbReference type="STRING" id="10090.ENSMUSP00000035553"/>
<dbReference type="GlyGen" id="E9Q349">
    <property type="glycosylation" value="1 site"/>
</dbReference>
<dbReference type="iPTMnet" id="E9Q349"/>
<dbReference type="PhosphoSitePlus" id="E9Q349"/>
<dbReference type="PaxDb" id="10090-ENSMUSP00000035553"/>
<dbReference type="PeptideAtlas" id="E9Q349"/>
<dbReference type="ProteomicsDB" id="297941">
    <molecule id="E9Q349-1"/>
</dbReference>
<dbReference type="Antibodypedia" id="174">
    <property type="antibodies" value="63 antibodies from 15 providers"/>
</dbReference>
<dbReference type="DNASU" id="212198"/>
<dbReference type="Ensembl" id="ENSMUST00000047115.9">
    <molecule id="E9Q349-1"/>
    <property type="protein sequence ID" value="ENSMUSP00000035553.8"/>
    <property type="gene ID" value="ENSMUSG00000040877.17"/>
</dbReference>
<dbReference type="Ensembl" id="ENSMUST00000167816.8">
    <molecule id="E9Q349-1"/>
    <property type="protein sequence ID" value="ENSMUSP00000129855.2"/>
    <property type="gene ID" value="ENSMUSG00000040877.17"/>
</dbReference>
<dbReference type="Ensembl" id="ENSMUST00000221510.2">
    <molecule id="E9Q349-2"/>
    <property type="protein sequence ID" value="ENSMUSP00000152632.2"/>
    <property type="gene ID" value="ENSMUSG00000040877.17"/>
</dbReference>
<dbReference type="GeneID" id="212198"/>
<dbReference type="KEGG" id="mmu:212198"/>
<dbReference type="UCSC" id="uc011yrx.1">
    <molecule id="E9Q349-1"/>
    <property type="organism name" value="mouse"/>
</dbReference>
<dbReference type="AGR" id="MGI:3045255"/>
<dbReference type="CTD" id="79446"/>
<dbReference type="MGI" id="MGI:3045255">
    <property type="gene designation" value="Wdr25"/>
</dbReference>
<dbReference type="VEuPathDB" id="HostDB:ENSMUSG00000040877"/>
<dbReference type="eggNOG" id="KOG0282">
    <property type="taxonomic scope" value="Eukaryota"/>
</dbReference>
<dbReference type="GeneTree" id="ENSGT00530000063583"/>
<dbReference type="HOGENOM" id="CLU_042878_0_0_1"/>
<dbReference type="InParanoid" id="E9Q349"/>
<dbReference type="OMA" id="FVCGGFH"/>
<dbReference type="OrthoDB" id="256303at2759"/>
<dbReference type="PhylomeDB" id="E9Q349"/>
<dbReference type="TreeFam" id="TF329325"/>
<dbReference type="BioGRID-ORCS" id="212198">
    <property type="hits" value="24 hits in 78 CRISPR screens"/>
</dbReference>
<dbReference type="ChiTaRS" id="Wdr25">
    <property type="organism name" value="mouse"/>
</dbReference>
<dbReference type="PRO" id="PR:E9Q349"/>
<dbReference type="Proteomes" id="UP000000589">
    <property type="component" value="Chromosome 12"/>
</dbReference>
<dbReference type="RNAct" id="E9Q349">
    <property type="molecule type" value="protein"/>
</dbReference>
<dbReference type="Bgee" id="ENSMUSG00000040877">
    <property type="expression patterns" value="Expressed in animal zygote and 140 other cell types or tissues"/>
</dbReference>
<dbReference type="ExpressionAtlas" id="E9Q349">
    <property type="expression patterns" value="baseline and differential"/>
</dbReference>
<dbReference type="CDD" id="cd00200">
    <property type="entry name" value="WD40"/>
    <property type="match status" value="1"/>
</dbReference>
<dbReference type="Gene3D" id="2.130.10.10">
    <property type="entry name" value="YVTN repeat-like/Quinoprotein amine dehydrogenase"/>
    <property type="match status" value="1"/>
</dbReference>
<dbReference type="InterPro" id="IPR015943">
    <property type="entry name" value="WD40/YVTN_repeat-like_dom_sf"/>
</dbReference>
<dbReference type="InterPro" id="IPR036322">
    <property type="entry name" value="WD40_repeat_dom_sf"/>
</dbReference>
<dbReference type="InterPro" id="IPR001680">
    <property type="entry name" value="WD40_rpt"/>
</dbReference>
<dbReference type="InterPro" id="IPR053053">
    <property type="entry name" value="WD_repeat_protein"/>
</dbReference>
<dbReference type="PANTHER" id="PTHR44566">
    <property type="entry name" value="TRANSDUCIN/WD40 REPEAT-LIKE SUPERFAMILY PROTEIN"/>
    <property type="match status" value="1"/>
</dbReference>
<dbReference type="PANTHER" id="PTHR44566:SF1">
    <property type="entry name" value="WD REPEAT-CONTAINING PROTEIN 25"/>
    <property type="match status" value="1"/>
</dbReference>
<dbReference type="Pfam" id="PF00400">
    <property type="entry name" value="WD40"/>
    <property type="match status" value="4"/>
</dbReference>
<dbReference type="SMART" id="SM00320">
    <property type="entry name" value="WD40"/>
    <property type="match status" value="5"/>
</dbReference>
<dbReference type="SUPFAM" id="SSF50978">
    <property type="entry name" value="WD40 repeat-like"/>
    <property type="match status" value="1"/>
</dbReference>
<dbReference type="PROSITE" id="PS50082">
    <property type="entry name" value="WD_REPEATS_2"/>
    <property type="match status" value="2"/>
</dbReference>
<dbReference type="PROSITE" id="PS50294">
    <property type="entry name" value="WD_REPEATS_REGION"/>
    <property type="match status" value="1"/>
</dbReference>
<gene>
    <name type="primary">Wdr25</name>
</gene>
<evidence type="ECO:0000256" key="1">
    <source>
        <dbReference type="SAM" id="MobiDB-lite"/>
    </source>
</evidence>
<evidence type="ECO:0000303" key="2">
    <source>
    </source>
</evidence>
<proteinExistence type="evidence at transcript level"/>
<protein>
    <recommendedName>
        <fullName>WD repeat-containing protein 25</fullName>
    </recommendedName>
</protein>
<sequence length="535" mass="58480">MASLVAYDDSDSETEADPARSGDAAGQISDASGMSRPSGMGFASSTVGVTKEGAQHTGNSPNEDPGMQRLPLARLWRSDPGSCPSQRLQWPSKEPDTTFPPSEPPRPSLWMSRAPVGHVPLAAACLKPLKPAWDVLKPSHDQSTFESTAGNASSSQRKRGEDCVLPYIPKRLRQLQALNPEAGGGKDGEPPGPPAGCAPAPLCVAPTVSEFIQPYLNSQYRETTVPKKVLFHLRGHRGPVNSIQWCPVFCKSHMLLSASMDKTFKVWNAVDSGHCLQTYSVHSEAVRAARWSPCGRRILSGGFDFALHLTDLETGTQVFSGQSDFRVTTLKFHPKDHNVFLCGGFSSEIKAWDMRTGKVVKGYKATIQQTLDILFLQEGSEFLSSTDASTRDSADRTIIAWDFRTAAKISNQIFHERYTCPSLALHPREPVFLAQTNGNYLALFSSVWPYRMSRRRRYEGHKVEGYAVGCECSPCGDLLVTGSADGRVLMFSFRTASRACTLQGHTQACLGTTYHPVLPSVLGTCSWGGDIKIWH</sequence>
<accession>E9Q349</accession>
<accession>Q8C4T7</accession>
<reference key="1">
    <citation type="journal article" date="2005" name="Science">
        <title>The transcriptional landscape of the mammalian genome.</title>
        <authorList>
            <person name="Carninci P."/>
            <person name="Kasukawa T."/>
            <person name="Katayama S."/>
            <person name="Gough J."/>
            <person name="Frith M.C."/>
            <person name="Maeda N."/>
            <person name="Oyama R."/>
            <person name="Ravasi T."/>
            <person name="Lenhard B."/>
            <person name="Wells C."/>
            <person name="Kodzius R."/>
            <person name="Shimokawa K."/>
            <person name="Bajic V.B."/>
            <person name="Brenner S.E."/>
            <person name="Batalov S."/>
            <person name="Forrest A.R."/>
            <person name="Zavolan M."/>
            <person name="Davis M.J."/>
            <person name="Wilming L.G."/>
            <person name="Aidinis V."/>
            <person name="Allen J.E."/>
            <person name="Ambesi-Impiombato A."/>
            <person name="Apweiler R."/>
            <person name="Aturaliya R.N."/>
            <person name="Bailey T.L."/>
            <person name="Bansal M."/>
            <person name="Baxter L."/>
            <person name="Beisel K.W."/>
            <person name="Bersano T."/>
            <person name="Bono H."/>
            <person name="Chalk A.M."/>
            <person name="Chiu K.P."/>
            <person name="Choudhary V."/>
            <person name="Christoffels A."/>
            <person name="Clutterbuck D.R."/>
            <person name="Crowe M.L."/>
            <person name="Dalla E."/>
            <person name="Dalrymple B.P."/>
            <person name="de Bono B."/>
            <person name="Della Gatta G."/>
            <person name="di Bernardo D."/>
            <person name="Down T."/>
            <person name="Engstrom P."/>
            <person name="Fagiolini M."/>
            <person name="Faulkner G."/>
            <person name="Fletcher C.F."/>
            <person name="Fukushima T."/>
            <person name="Furuno M."/>
            <person name="Futaki S."/>
            <person name="Gariboldi M."/>
            <person name="Georgii-Hemming P."/>
            <person name="Gingeras T.R."/>
            <person name="Gojobori T."/>
            <person name="Green R.E."/>
            <person name="Gustincich S."/>
            <person name="Harbers M."/>
            <person name="Hayashi Y."/>
            <person name="Hensch T.K."/>
            <person name="Hirokawa N."/>
            <person name="Hill D."/>
            <person name="Huminiecki L."/>
            <person name="Iacono M."/>
            <person name="Ikeo K."/>
            <person name="Iwama A."/>
            <person name="Ishikawa T."/>
            <person name="Jakt M."/>
            <person name="Kanapin A."/>
            <person name="Katoh M."/>
            <person name="Kawasawa Y."/>
            <person name="Kelso J."/>
            <person name="Kitamura H."/>
            <person name="Kitano H."/>
            <person name="Kollias G."/>
            <person name="Krishnan S.P."/>
            <person name="Kruger A."/>
            <person name="Kummerfeld S.K."/>
            <person name="Kurochkin I.V."/>
            <person name="Lareau L.F."/>
            <person name="Lazarevic D."/>
            <person name="Lipovich L."/>
            <person name="Liu J."/>
            <person name="Liuni S."/>
            <person name="McWilliam S."/>
            <person name="Madan Babu M."/>
            <person name="Madera M."/>
            <person name="Marchionni L."/>
            <person name="Matsuda H."/>
            <person name="Matsuzawa S."/>
            <person name="Miki H."/>
            <person name="Mignone F."/>
            <person name="Miyake S."/>
            <person name="Morris K."/>
            <person name="Mottagui-Tabar S."/>
            <person name="Mulder N."/>
            <person name="Nakano N."/>
            <person name="Nakauchi H."/>
            <person name="Ng P."/>
            <person name="Nilsson R."/>
            <person name="Nishiguchi S."/>
            <person name="Nishikawa S."/>
            <person name="Nori F."/>
            <person name="Ohara O."/>
            <person name="Okazaki Y."/>
            <person name="Orlando V."/>
            <person name="Pang K.C."/>
            <person name="Pavan W.J."/>
            <person name="Pavesi G."/>
            <person name="Pesole G."/>
            <person name="Petrovsky N."/>
            <person name="Piazza S."/>
            <person name="Reed J."/>
            <person name="Reid J.F."/>
            <person name="Ring B.Z."/>
            <person name="Ringwald M."/>
            <person name="Rost B."/>
            <person name="Ruan Y."/>
            <person name="Salzberg S.L."/>
            <person name="Sandelin A."/>
            <person name="Schneider C."/>
            <person name="Schoenbach C."/>
            <person name="Sekiguchi K."/>
            <person name="Semple C.A."/>
            <person name="Seno S."/>
            <person name="Sessa L."/>
            <person name="Sheng Y."/>
            <person name="Shibata Y."/>
            <person name="Shimada H."/>
            <person name="Shimada K."/>
            <person name="Silva D."/>
            <person name="Sinclair B."/>
            <person name="Sperling S."/>
            <person name="Stupka E."/>
            <person name="Sugiura K."/>
            <person name="Sultana R."/>
            <person name="Takenaka Y."/>
            <person name="Taki K."/>
            <person name="Tammoja K."/>
            <person name="Tan S.L."/>
            <person name="Tang S."/>
            <person name="Taylor M.S."/>
            <person name="Tegner J."/>
            <person name="Teichmann S.A."/>
            <person name="Ueda H.R."/>
            <person name="van Nimwegen E."/>
            <person name="Verardo R."/>
            <person name="Wei C.L."/>
            <person name="Yagi K."/>
            <person name="Yamanishi H."/>
            <person name="Zabarovsky E."/>
            <person name="Zhu S."/>
            <person name="Zimmer A."/>
            <person name="Hide W."/>
            <person name="Bult C."/>
            <person name="Grimmond S.M."/>
            <person name="Teasdale R.D."/>
            <person name="Liu E.T."/>
            <person name="Brusic V."/>
            <person name="Quackenbush J."/>
            <person name="Wahlestedt C."/>
            <person name="Mattick J.S."/>
            <person name="Hume D.A."/>
            <person name="Kai C."/>
            <person name="Sasaki D."/>
            <person name="Tomaru Y."/>
            <person name="Fukuda S."/>
            <person name="Kanamori-Katayama M."/>
            <person name="Suzuki M."/>
            <person name="Aoki J."/>
            <person name="Arakawa T."/>
            <person name="Iida J."/>
            <person name="Imamura K."/>
            <person name="Itoh M."/>
            <person name="Kato T."/>
            <person name="Kawaji H."/>
            <person name="Kawagashira N."/>
            <person name="Kawashima T."/>
            <person name="Kojima M."/>
            <person name="Kondo S."/>
            <person name="Konno H."/>
            <person name="Nakano K."/>
            <person name="Ninomiya N."/>
            <person name="Nishio T."/>
            <person name="Okada M."/>
            <person name="Plessy C."/>
            <person name="Shibata K."/>
            <person name="Shiraki T."/>
            <person name="Suzuki S."/>
            <person name="Tagami M."/>
            <person name="Waki K."/>
            <person name="Watahiki A."/>
            <person name="Okamura-Oho Y."/>
            <person name="Suzuki H."/>
            <person name="Kawai J."/>
            <person name="Hayashizaki Y."/>
        </authorList>
    </citation>
    <scope>NUCLEOTIDE SEQUENCE [LARGE SCALE MRNA] (ISOFORM 2)</scope>
    <source>
        <strain>C57BL/6J</strain>
        <tissue>Cerebellum</tissue>
    </source>
</reference>
<reference key="2">
    <citation type="journal article" date="2009" name="PLoS Biol.">
        <title>Lineage-specific biology revealed by a finished genome assembly of the mouse.</title>
        <authorList>
            <person name="Church D.M."/>
            <person name="Goodstadt L."/>
            <person name="Hillier L.W."/>
            <person name="Zody M.C."/>
            <person name="Goldstein S."/>
            <person name="She X."/>
            <person name="Bult C.J."/>
            <person name="Agarwala R."/>
            <person name="Cherry J.L."/>
            <person name="DiCuccio M."/>
            <person name="Hlavina W."/>
            <person name="Kapustin Y."/>
            <person name="Meric P."/>
            <person name="Maglott D."/>
            <person name="Birtle Z."/>
            <person name="Marques A.C."/>
            <person name="Graves T."/>
            <person name="Zhou S."/>
            <person name="Teague B."/>
            <person name="Potamousis K."/>
            <person name="Churas C."/>
            <person name="Place M."/>
            <person name="Herschleb J."/>
            <person name="Runnheim R."/>
            <person name="Forrest D."/>
            <person name="Amos-Landgraf J."/>
            <person name="Schwartz D.C."/>
            <person name="Cheng Z."/>
            <person name="Lindblad-Toh K."/>
            <person name="Eichler E.E."/>
            <person name="Ponting C.P."/>
        </authorList>
    </citation>
    <scope>NUCLEOTIDE SEQUENCE [LARGE SCALE GENOMIC DNA]</scope>
    <source>
        <strain>C57BL/6J</strain>
    </source>
</reference>
<feature type="chain" id="PRO_0000415827" description="WD repeat-containing protein 25">
    <location>
        <begin position="1"/>
        <end position="535"/>
    </location>
</feature>
<feature type="repeat" description="WD 1">
    <location>
        <begin position="235"/>
        <end position="277"/>
    </location>
</feature>
<feature type="repeat" description="WD 2">
    <location>
        <begin position="281"/>
        <end position="320"/>
    </location>
</feature>
<feature type="repeat" description="WD 3">
    <location>
        <begin position="321"/>
        <end position="362"/>
    </location>
</feature>
<feature type="repeat" description="WD 4">
    <location>
        <begin position="365"/>
        <end position="411"/>
    </location>
</feature>
<feature type="repeat" description="WD 5">
    <location>
        <begin position="415"/>
        <end position="454"/>
    </location>
</feature>
<feature type="repeat" description="WD 6">
    <location>
        <begin position="460"/>
        <end position="501"/>
    </location>
</feature>
<feature type="repeat" description="WD 7">
    <location>
        <begin position="504"/>
        <end position="535"/>
    </location>
</feature>
<feature type="region of interest" description="Disordered" evidence="1">
    <location>
        <begin position="1"/>
        <end position="108"/>
    </location>
</feature>
<feature type="region of interest" description="Disordered" evidence="1">
    <location>
        <begin position="141"/>
        <end position="160"/>
    </location>
</feature>
<feature type="compositionally biased region" description="Polar residues" evidence="1">
    <location>
        <begin position="141"/>
        <end position="155"/>
    </location>
</feature>
<feature type="splice variant" id="VSP_042397" description="In isoform 2." evidence="2">
    <location>
        <begin position="1"/>
        <end position="352"/>
    </location>
</feature>
<feature type="splice variant" id="VSP_042398" description="In isoform 2." evidence="2">
    <original>DMRTG</original>
    <variation>MSEIY</variation>
    <location>
        <begin position="353"/>
        <end position="357"/>
    </location>
</feature>